<sequence length="193" mass="20547">MPKGRRGSHSPTMSQRSAPPLYFPSLYDRGISSSPLSDFNIWKKLFVPLKAGGAPVGGAAGARSLSQALPAPAPPPPPPPGLGPSSERPWPSPWPSGLASIPYEPLRFFYSPPPGPEVVASPLVPCPSTPRLASASHPEELCELEIRIKELELLTITGDGFDSQSYTFLKALKDEKLQGLKTKQPGKKSASLS</sequence>
<name>CK091_HUMAN</name>
<dbReference type="EMBL" id="AL049629">
    <property type="status" value="NOT_ANNOTATED_CDS"/>
    <property type="molecule type" value="Genomic_DNA"/>
</dbReference>
<dbReference type="EMBL" id="AB231759">
    <property type="protein sequence ID" value="BAE46895.1"/>
    <property type="molecule type" value="mRNA"/>
</dbReference>
<dbReference type="EMBL" id="AB231760">
    <property type="protein sequence ID" value="BAE46896.1"/>
    <property type="molecule type" value="mRNA"/>
</dbReference>
<dbReference type="CCDS" id="CCDS53615.1">
    <molecule id="Q3C1V1-1"/>
</dbReference>
<dbReference type="RefSeq" id="NP_001160164.1">
    <molecule id="Q3C1V1-1"/>
    <property type="nucleotide sequence ID" value="NM_001166692.2"/>
</dbReference>
<dbReference type="RefSeq" id="XP_016872542.1">
    <molecule id="Q3C1V1-1"/>
    <property type="nucleotide sequence ID" value="XM_017017053.2"/>
</dbReference>
<dbReference type="SMR" id="Q3C1V1"/>
<dbReference type="BioGRID" id="935242">
    <property type="interactions" value="1"/>
</dbReference>
<dbReference type="FunCoup" id="Q3C1V1">
    <property type="interactions" value="5"/>
</dbReference>
<dbReference type="STRING" id="9606.ENSP00000368296"/>
<dbReference type="iPTMnet" id="Q3C1V1"/>
<dbReference type="PhosphoSitePlus" id="Q3C1V1"/>
<dbReference type="BioMuta" id="C11orf91"/>
<dbReference type="DMDM" id="190461789"/>
<dbReference type="MassIVE" id="Q3C1V1"/>
<dbReference type="PaxDb" id="9606-ENSP00000368296"/>
<dbReference type="PeptideAtlas" id="Q3C1V1"/>
<dbReference type="ProteomicsDB" id="61682">
    <molecule id="Q3C1V1-1"/>
</dbReference>
<dbReference type="ProteomicsDB" id="61683">
    <molecule id="Q3C1V1-2"/>
</dbReference>
<dbReference type="Antibodypedia" id="62997">
    <property type="antibodies" value="21 antibodies from 8 providers"/>
</dbReference>
<dbReference type="DNASU" id="100131378"/>
<dbReference type="Ensembl" id="ENST00000379011.5">
    <molecule id="Q3C1V1-1"/>
    <property type="protein sequence ID" value="ENSP00000368296.4"/>
    <property type="gene ID" value="ENSG00000205177.7"/>
</dbReference>
<dbReference type="GeneID" id="100131378"/>
<dbReference type="KEGG" id="hsa:100131378"/>
<dbReference type="MANE-Select" id="ENST00000379011.5">
    <property type="protein sequence ID" value="ENSP00000368296.4"/>
    <property type="RefSeq nucleotide sequence ID" value="NM_001166692.2"/>
    <property type="RefSeq protein sequence ID" value="NP_001160164.1"/>
</dbReference>
<dbReference type="UCSC" id="uc001mur.3">
    <molecule id="Q3C1V1-1"/>
    <property type="organism name" value="human"/>
</dbReference>
<dbReference type="AGR" id="HGNC:34444"/>
<dbReference type="CTD" id="100131378"/>
<dbReference type="GeneCards" id="C11orf91"/>
<dbReference type="HGNC" id="HGNC:34444">
    <property type="gene designation" value="C11orf91"/>
</dbReference>
<dbReference type="HPA" id="ENSG00000205177">
    <property type="expression patterns" value="Tissue enhanced (adipose tissue, gallbladder, testis)"/>
</dbReference>
<dbReference type="neXtProt" id="NX_Q3C1V1"/>
<dbReference type="OpenTargets" id="ENSG00000205177"/>
<dbReference type="PharmGKB" id="PA164716759"/>
<dbReference type="VEuPathDB" id="HostDB:ENSG00000205177"/>
<dbReference type="eggNOG" id="ENOG502S5Z2">
    <property type="taxonomic scope" value="Eukaryota"/>
</dbReference>
<dbReference type="GeneTree" id="ENSGT00390000002169"/>
<dbReference type="HOGENOM" id="CLU_1402030_0_0_1"/>
<dbReference type="InParanoid" id="Q3C1V1"/>
<dbReference type="OMA" id="RCCPPPW"/>
<dbReference type="OrthoDB" id="9938805at2759"/>
<dbReference type="PAN-GO" id="Q3C1V1">
    <property type="GO annotations" value="0 GO annotations based on evolutionary models"/>
</dbReference>
<dbReference type="PhylomeDB" id="Q3C1V1"/>
<dbReference type="TreeFam" id="TF339799"/>
<dbReference type="PathwayCommons" id="Q3C1V1"/>
<dbReference type="BioGRID-ORCS" id="100131378">
    <property type="hits" value="14 hits in 1110 CRISPR screens"/>
</dbReference>
<dbReference type="Pharos" id="Q3C1V1">
    <property type="development level" value="Tdark"/>
</dbReference>
<dbReference type="PRO" id="PR:Q3C1V1"/>
<dbReference type="Proteomes" id="UP000005640">
    <property type="component" value="Chromosome 11"/>
</dbReference>
<dbReference type="RNAct" id="Q3C1V1">
    <property type="molecule type" value="protein"/>
</dbReference>
<dbReference type="Bgee" id="ENSG00000205177">
    <property type="expression patterns" value="Expressed in male germ line stem cell (sensu Vertebrata) in testis and 88 other cell types or tissues"/>
</dbReference>
<dbReference type="ExpressionAtlas" id="Q3C1V1">
    <property type="expression patterns" value="baseline and differential"/>
</dbReference>
<dbReference type="InterPro" id="IPR040027">
    <property type="entry name" value="C11orf91-like"/>
</dbReference>
<dbReference type="PANTHER" id="PTHR36288">
    <property type="entry name" value="SIMILAR TO RIKEN CDNA A930018P22"/>
    <property type="match status" value="1"/>
</dbReference>
<dbReference type="PANTHER" id="PTHR36288:SF1">
    <property type="entry name" value="SIMILAR TO RIKEN CDNA A930018P22"/>
    <property type="match status" value="1"/>
</dbReference>
<dbReference type="Pfam" id="PF17669">
    <property type="entry name" value="DUF5529"/>
    <property type="match status" value="1"/>
</dbReference>
<organism>
    <name type="scientific">Homo sapiens</name>
    <name type="common">Human</name>
    <dbReference type="NCBI Taxonomy" id="9606"/>
    <lineage>
        <taxon>Eukaryota</taxon>
        <taxon>Metazoa</taxon>
        <taxon>Chordata</taxon>
        <taxon>Craniata</taxon>
        <taxon>Vertebrata</taxon>
        <taxon>Euteleostomi</taxon>
        <taxon>Mammalia</taxon>
        <taxon>Eutheria</taxon>
        <taxon>Euarchontoglires</taxon>
        <taxon>Primates</taxon>
        <taxon>Haplorrhini</taxon>
        <taxon>Catarrhini</taxon>
        <taxon>Hominidae</taxon>
        <taxon>Homo</taxon>
    </lineage>
</organism>
<evidence type="ECO:0000256" key="1">
    <source>
        <dbReference type="SAM" id="MobiDB-lite"/>
    </source>
</evidence>
<evidence type="ECO:0000303" key="2">
    <source ref="2"/>
</evidence>
<evidence type="ECO:0000305" key="3"/>
<gene>
    <name type="primary">C11orf91</name>
</gene>
<feature type="chain" id="PRO_0000340697" description="Uncharacterized protein C11orf91">
    <location>
        <begin position="1"/>
        <end position="193"/>
    </location>
</feature>
<feature type="region of interest" description="Disordered" evidence="1">
    <location>
        <begin position="55"/>
        <end position="94"/>
    </location>
</feature>
<feature type="compositionally biased region" description="Pro residues" evidence="1">
    <location>
        <begin position="71"/>
        <end position="82"/>
    </location>
</feature>
<feature type="splice variant" id="VSP_034218" description="In isoform 2." evidence="2">
    <original>YTFLKALKDEKLQGLKTKQPGKKSASLS</original>
    <variation>FLGLWTTCADAGRIPQPTS</variation>
    <location>
        <begin position="166"/>
        <end position="193"/>
    </location>
</feature>
<feature type="sequence conflict" description="In Ref. 2; BAE46895." evidence="3" ref="2">
    <original>V</original>
    <variation>F</variation>
    <location>
        <position position="119"/>
    </location>
</feature>
<feature type="sequence conflict" description="In Ref. 2; BAE46895." evidence="3" ref="2">
    <original>R</original>
    <variation>L</variation>
    <location>
        <position position="147"/>
    </location>
</feature>
<feature type="sequence conflict" description="In Ref. 2; BAE46895." evidence="3" ref="2">
    <original>K</original>
    <variation>Q</variation>
    <location>
        <position position="149"/>
    </location>
</feature>
<proteinExistence type="evidence at protein level"/>
<reference key="1">
    <citation type="journal article" date="2006" name="Nature">
        <title>Human chromosome 11 DNA sequence and analysis including novel gene identification.</title>
        <authorList>
            <person name="Taylor T.D."/>
            <person name="Noguchi H."/>
            <person name="Totoki Y."/>
            <person name="Toyoda A."/>
            <person name="Kuroki Y."/>
            <person name="Dewar K."/>
            <person name="Lloyd C."/>
            <person name="Itoh T."/>
            <person name="Takeda T."/>
            <person name="Kim D.-W."/>
            <person name="She X."/>
            <person name="Barlow K.F."/>
            <person name="Bloom T."/>
            <person name="Bruford E."/>
            <person name="Chang J.L."/>
            <person name="Cuomo C.A."/>
            <person name="Eichler E."/>
            <person name="FitzGerald M.G."/>
            <person name="Jaffe D.B."/>
            <person name="LaButti K."/>
            <person name="Nicol R."/>
            <person name="Park H.-S."/>
            <person name="Seaman C."/>
            <person name="Sougnez C."/>
            <person name="Yang X."/>
            <person name="Zimmer A.R."/>
            <person name="Zody M.C."/>
            <person name="Birren B.W."/>
            <person name="Nusbaum C."/>
            <person name="Fujiyama A."/>
            <person name="Hattori M."/>
            <person name="Rogers J."/>
            <person name="Lander E.S."/>
            <person name="Sakaki Y."/>
        </authorList>
    </citation>
    <scope>NUCLEOTIDE SEQUENCE [LARGE SCALE GENOMIC DNA]</scope>
</reference>
<reference key="2">
    <citation type="submission" date="2005-08" db="EMBL/GenBank/DDBJ databases">
        <authorList>
            <person name="Totoki Y."/>
            <person name="Yada T."/>
            <person name="Sakaki Y."/>
            <person name="Takeda T."/>
        </authorList>
    </citation>
    <scope>NUCLEOTIDE SEQUENCE [LARGE SCALE MRNA] OF 119-185 (ISOFORM 1)</scope>
    <scope>NUCLEOTIDE SEQUENCE [LARGE SCALE MRNA] OF 116-193 (ISOFORM 2)</scope>
</reference>
<accession>Q3C1V1</accession>
<accession>Q3C1V2</accession>
<comment type="alternative products">
    <event type="alternative splicing"/>
    <isoform>
        <id>Q3C1V1-1</id>
        <name>1</name>
        <sequence type="displayed"/>
    </isoform>
    <isoform>
        <id>Q3C1V1-2</id>
        <name>2</name>
        <sequence type="described" ref="VSP_034218"/>
    </isoform>
</comment>
<keyword id="KW-0025">Alternative splicing</keyword>
<keyword id="KW-1267">Proteomics identification</keyword>
<keyword id="KW-1185">Reference proteome</keyword>
<protein>
    <recommendedName>
        <fullName>Uncharacterized protein C11orf91</fullName>
    </recommendedName>
</protein>